<sequence length="344" mass="38154">MAALIEKFWFGHHPKGLMLLLNVLFWPVFWPLSKLFGFISVRRRNKYQTGEKVAYRAPVPVVVVGNITAGGNGKTPVVVWLVEQLQAKGLKPGVVSRGYGGKAPHYPYLVEDKTSTDLVGDEPVLIRRRTGAPVAVSPIRSDAVMMLLEHDVDVIITDDGLQHYALARDIEFVVIDGQRRFGNQQLLPLGPLRETCDRLADVDFLICNGGKAQKNEAPMHLQPSALINVKTGERCSINELENIVAMAGIGHPPRFFKTLEELGVTPVHCQPFTDHQAFSETELKHLAQQGQHLVMTEKDAVKCHAFAQSNWWYVPVDAVIPTSNATAIINRIIKVKEEYGSPSA</sequence>
<protein>
    <recommendedName>
        <fullName evidence="1">Tetraacyldisaccharide 4'-kinase</fullName>
        <ecNumber evidence="1">2.7.1.130</ecNumber>
    </recommendedName>
    <alternativeName>
        <fullName evidence="1">Lipid A 4'-kinase</fullName>
    </alternativeName>
</protein>
<organism>
    <name type="scientific">Photobacterium profundum (strain SS9)</name>
    <dbReference type="NCBI Taxonomy" id="298386"/>
    <lineage>
        <taxon>Bacteria</taxon>
        <taxon>Pseudomonadati</taxon>
        <taxon>Pseudomonadota</taxon>
        <taxon>Gammaproteobacteria</taxon>
        <taxon>Vibrionales</taxon>
        <taxon>Vibrionaceae</taxon>
        <taxon>Photobacterium</taxon>
    </lineage>
</organism>
<evidence type="ECO:0000255" key="1">
    <source>
        <dbReference type="HAMAP-Rule" id="MF_00409"/>
    </source>
</evidence>
<name>LPXK_PHOPR</name>
<comment type="function">
    <text evidence="1">Transfers the gamma-phosphate of ATP to the 4'-position of a tetraacyldisaccharide 1-phosphate intermediate (termed DS-1-P) to form tetraacyldisaccharide 1,4'-bis-phosphate (lipid IVA).</text>
</comment>
<comment type="catalytic activity">
    <reaction evidence="1">
        <text>a lipid A disaccharide + ATP = a lipid IVA + ADP + H(+)</text>
        <dbReference type="Rhea" id="RHEA:67840"/>
        <dbReference type="ChEBI" id="CHEBI:15378"/>
        <dbReference type="ChEBI" id="CHEBI:30616"/>
        <dbReference type="ChEBI" id="CHEBI:176343"/>
        <dbReference type="ChEBI" id="CHEBI:176425"/>
        <dbReference type="ChEBI" id="CHEBI:456216"/>
        <dbReference type="EC" id="2.7.1.130"/>
    </reaction>
</comment>
<comment type="pathway">
    <text evidence="1">Glycolipid biosynthesis; lipid IV(A) biosynthesis; lipid IV(A) from (3R)-3-hydroxytetradecanoyl-[acyl-carrier-protein] and UDP-N-acetyl-alpha-D-glucosamine: step 6/6.</text>
</comment>
<comment type="similarity">
    <text evidence="1">Belongs to the LpxK family.</text>
</comment>
<gene>
    <name evidence="1" type="primary">lpxK</name>
    <name type="ordered locus">PBPRA2384</name>
</gene>
<reference key="1">
    <citation type="journal article" date="2005" name="Science">
        <title>Life at depth: Photobacterium profundum genome sequence and expression analysis.</title>
        <authorList>
            <person name="Vezzi A."/>
            <person name="Campanaro S."/>
            <person name="D'Angelo M."/>
            <person name="Simonato F."/>
            <person name="Vitulo N."/>
            <person name="Lauro F.M."/>
            <person name="Cestaro A."/>
            <person name="Malacrida G."/>
            <person name="Simionati B."/>
            <person name="Cannata N."/>
            <person name="Romualdi C."/>
            <person name="Bartlett D.H."/>
            <person name="Valle G."/>
        </authorList>
    </citation>
    <scope>NUCLEOTIDE SEQUENCE [LARGE SCALE GENOMIC DNA]</scope>
    <source>
        <strain>ATCC BAA-1253 / SS9</strain>
    </source>
</reference>
<proteinExistence type="inferred from homology"/>
<keyword id="KW-0067">ATP-binding</keyword>
<keyword id="KW-0418">Kinase</keyword>
<keyword id="KW-0441">Lipid A biosynthesis</keyword>
<keyword id="KW-0444">Lipid biosynthesis</keyword>
<keyword id="KW-0443">Lipid metabolism</keyword>
<keyword id="KW-0547">Nucleotide-binding</keyword>
<keyword id="KW-1185">Reference proteome</keyword>
<keyword id="KW-0808">Transferase</keyword>
<dbReference type="EC" id="2.7.1.130" evidence="1"/>
<dbReference type="EMBL" id="CR378670">
    <property type="protein sequence ID" value="CAG20769.1"/>
    <property type="molecule type" value="Genomic_DNA"/>
</dbReference>
<dbReference type="RefSeq" id="WP_011219053.1">
    <property type="nucleotide sequence ID" value="NC_006370.1"/>
</dbReference>
<dbReference type="SMR" id="Q6LPK7"/>
<dbReference type="STRING" id="298386.PBPRA2384"/>
<dbReference type="KEGG" id="ppr:PBPRA2384"/>
<dbReference type="eggNOG" id="COG1663">
    <property type="taxonomic scope" value="Bacteria"/>
</dbReference>
<dbReference type="HOGENOM" id="CLU_038816_2_0_6"/>
<dbReference type="UniPathway" id="UPA00359">
    <property type="reaction ID" value="UER00482"/>
</dbReference>
<dbReference type="Proteomes" id="UP000000593">
    <property type="component" value="Chromosome 1"/>
</dbReference>
<dbReference type="GO" id="GO:0005886">
    <property type="term" value="C:plasma membrane"/>
    <property type="evidence" value="ECO:0007669"/>
    <property type="project" value="TreeGrafter"/>
</dbReference>
<dbReference type="GO" id="GO:0005524">
    <property type="term" value="F:ATP binding"/>
    <property type="evidence" value="ECO:0007669"/>
    <property type="project" value="UniProtKB-UniRule"/>
</dbReference>
<dbReference type="GO" id="GO:0009029">
    <property type="term" value="F:tetraacyldisaccharide 4'-kinase activity"/>
    <property type="evidence" value="ECO:0007669"/>
    <property type="project" value="UniProtKB-UniRule"/>
</dbReference>
<dbReference type="GO" id="GO:0009245">
    <property type="term" value="P:lipid A biosynthetic process"/>
    <property type="evidence" value="ECO:0007669"/>
    <property type="project" value="UniProtKB-UniRule"/>
</dbReference>
<dbReference type="GO" id="GO:0009244">
    <property type="term" value="P:lipopolysaccharide core region biosynthetic process"/>
    <property type="evidence" value="ECO:0007669"/>
    <property type="project" value="TreeGrafter"/>
</dbReference>
<dbReference type="HAMAP" id="MF_00409">
    <property type="entry name" value="LpxK"/>
    <property type="match status" value="1"/>
</dbReference>
<dbReference type="InterPro" id="IPR003758">
    <property type="entry name" value="LpxK"/>
</dbReference>
<dbReference type="InterPro" id="IPR027417">
    <property type="entry name" value="P-loop_NTPase"/>
</dbReference>
<dbReference type="NCBIfam" id="TIGR00682">
    <property type="entry name" value="lpxK"/>
    <property type="match status" value="1"/>
</dbReference>
<dbReference type="PANTHER" id="PTHR42724">
    <property type="entry name" value="TETRAACYLDISACCHARIDE 4'-KINASE"/>
    <property type="match status" value="1"/>
</dbReference>
<dbReference type="PANTHER" id="PTHR42724:SF1">
    <property type="entry name" value="TETRAACYLDISACCHARIDE 4'-KINASE, MITOCHONDRIAL-RELATED"/>
    <property type="match status" value="1"/>
</dbReference>
<dbReference type="Pfam" id="PF02606">
    <property type="entry name" value="LpxK"/>
    <property type="match status" value="1"/>
</dbReference>
<dbReference type="SUPFAM" id="SSF52540">
    <property type="entry name" value="P-loop containing nucleoside triphosphate hydrolases"/>
    <property type="match status" value="1"/>
</dbReference>
<feature type="chain" id="PRO_0000190936" description="Tetraacyldisaccharide 4'-kinase">
    <location>
        <begin position="1"/>
        <end position="344"/>
    </location>
</feature>
<feature type="binding site" evidence="1">
    <location>
        <begin position="68"/>
        <end position="75"/>
    </location>
    <ligand>
        <name>ATP</name>
        <dbReference type="ChEBI" id="CHEBI:30616"/>
    </ligand>
</feature>
<accession>Q6LPK7</accession>